<proteinExistence type="inferred from homology"/>
<evidence type="ECO:0000255" key="1">
    <source>
        <dbReference type="HAMAP-Rule" id="MF_01318"/>
    </source>
</evidence>
<evidence type="ECO:0000305" key="2"/>
<name>RL1_STRP8</name>
<organism>
    <name type="scientific">Streptococcus pyogenes serotype M18 (strain MGAS8232)</name>
    <dbReference type="NCBI Taxonomy" id="186103"/>
    <lineage>
        <taxon>Bacteria</taxon>
        <taxon>Bacillati</taxon>
        <taxon>Bacillota</taxon>
        <taxon>Bacilli</taxon>
        <taxon>Lactobacillales</taxon>
        <taxon>Streptococcaceae</taxon>
        <taxon>Streptococcus</taxon>
    </lineage>
</organism>
<keyword id="KW-0678">Repressor</keyword>
<keyword id="KW-0687">Ribonucleoprotein</keyword>
<keyword id="KW-0689">Ribosomal protein</keyword>
<keyword id="KW-0694">RNA-binding</keyword>
<keyword id="KW-0699">rRNA-binding</keyword>
<keyword id="KW-0810">Translation regulation</keyword>
<keyword id="KW-0820">tRNA-binding</keyword>
<protein>
    <recommendedName>
        <fullName evidence="1">Large ribosomal subunit protein uL1</fullName>
    </recommendedName>
    <alternativeName>
        <fullName evidence="2">50S ribosomal protein L1</fullName>
    </alternativeName>
</protein>
<reference key="1">
    <citation type="journal article" date="2002" name="Proc. Natl. Acad. Sci. U.S.A.">
        <title>Genome sequence and comparative microarray analysis of serotype M18 group A Streptococcus strains associated with acute rheumatic fever outbreaks.</title>
        <authorList>
            <person name="Smoot J.C."/>
            <person name="Barbian K.D."/>
            <person name="Van Gompel J.J."/>
            <person name="Smoot L.M."/>
            <person name="Chaussee M.S."/>
            <person name="Sylva G.L."/>
            <person name="Sturdevant D.E."/>
            <person name="Ricklefs S.M."/>
            <person name="Porcella S.F."/>
            <person name="Parkins L.D."/>
            <person name="Beres S.B."/>
            <person name="Campbell D.S."/>
            <person name="Smith T.M."/>
            <person name="Zhang Q."/>
            <person name="Kapur V."/>
            <person name="Daly J.A."/>
            <person name="Veasy L.G."/>
            <person name="Musser J.M."/>
        </authorList>
    </citation>
    <scope>NUCLEOTIDE SEQUENCE [LARGE SCALE GENOMIC DNA]</scope>
    <source>
        <strain>MGAS8232</strain>
    </source>
</reference>
<accession>P66098</accession>
<accession>Q9A152</accession>
<feature type="chain" id="PRO_0000125754" description="Large ribosomal subunit protein uL1">
    <location>
        <begin position="1"/>
        <end position="229"/>
    </location>
</feature>
<sequence>MAKKSKQMRAALEKVDSTKAYSVEEAVALVKETNFAKFDASVEVAYNLNIDVRKADQQIRGAMVLPNGTGKTQRVLVFARGAKAEEAKAAGADFVGEDDLVAKINGGWLDFDVVIATPDMMAIVGRLGRVLGPRNLMPNPKTGTVTMDVAKAVEESKGGKITYRADKAGNVQALIGKVSFDADKLVENFKAFHDVMAKAKPATAKGTYMANVSITSTQGVGIKVDPNSL</sequence>
<gene>
    <name evidence="1" type="primary">rplA</name>
    <name type="ordered locus">spyM18_0504</name>
</gene>
<comment type="function">
    <text evidence="1">Binds directly to 23S rRNA. The L1 stalk is quite mobile in the ribosome, and is involved in E site tRNA release.</text>
</comment>
<comment type="function">
    <text evidence="1">Protein L1 is also a translational repressor protein, it controls the translation of the L11 operon by binding to its mRNA.</text>
</comment>
<comment type="subunit">
    <text evidence="1">Part of the 50S ribosomal subunit.</text>
</comment>
<comment type="similarity">
    <text evidence="1">Belongs to the universal ribosomal protein uL1 family.</text>
</comment>
<dbReference type="EMBL" id="AE009949">
    <property type="protein sequence ID" value="AAL97222.1"/>
    <property type="molecule type" value="Genomic_DNA"/>
</dbReference>
<dbReference type="RefSeq" id="WP_002985768.1">
    <property type="nucleotide sequence ID" value="NC_003485.1"/>
</dbReference>
<dbReference type="SMR" id="P66098"/>
<dbReference type="KEGG" id="spm:spyM18_0504"/>
<dbReference type="HOGENOM" id="CLU_062853_0_0_9"/>
<dbReference type="GO" id="GO:0015934">
    <property type="term" value="C:large ribosomal subunit"/>
    <property type="evidence" value="ECO:0007669"/>
    <property type="project" value="InterPro"/>
</dbReference>
<dbReference type="GO" id="GO:0019843">
    <property type="term" value="F:rRNA binding"/>
    <property type="evidence" value="ECO:0007669"/>
    <property type="project" value="UniProtKB-UniRule"/>
</dbReference>
<dbReference type="GO" id="GO:0003735">
    <property type="term" value="F:structural constituent of ribosome"/>
    <property type="evidence" value="ECO:0007669"/>
    <property type="project" value="InterPro"/>
</dbReference>
<dbReference type="GO" id="GO:0000049">
    <property type="term" value="F:tRNA binding"/>
    <property type="evidence" value="ECO:0007669"/>
    <property type="project" value="UniProtKB-KW"/>
</dbReference>
<dbReference type="GO" id="GO:0006417">
    <property type="term" value="P:regulation of translation"/>
    <property type="evidence" value="ECO:0007669"/>
    <property type="project" value="UniProtKB-KW"/>
</dbReference>
<dbReference type="GO" id="GO:0006412">
    <property type="term" value="P:translation"/>
    <property type="evidence" value="ECO:0007669"/>
    <property type="project" value="UniProtKB-UniRule"/>
</dbReference>
<dbReference type="CDD" id="cd00403">
    <property type="entry name" value="Ribosomal_L1"/>
    <property type="match status" value="1"/>
</dbReference>
<dbReference type="FunFam" id="3.40.50.790:FF:000001">
    <property type="entry name" value="50S ribosomal protein L1"/>
    <property type="match status" value="1"/>
</dbReference>
<dbReference type="Gene3D" id="3.30.190.20">
    <property type="match status" value="1"/>
</dbReference>
<dbReference type="Gene3D" id="3.40.50.790">
    <property type="match status" value="1"/>
</dbReference>
<dbReference type="HAMAP" id="MF_01318_B">
    <property type="entry name" value="Ribosomal_uL1_B"/>
    <property type="match status" value="1"/>
</dbReference>
<dbReference type="InterPro" id="IPR005878">
    <property type="entry name" value="Ribosom_uL1_bac-type"/>
</dbReference>
<dbReference type="InterPro" id="IPR002143">
    <property type="entry name" value="Ribosomal_uL1"/>
</dbReference>
<dbReference type="InterPro" id="IPR023674">
    <property type="entry name" value="Ribosomal_uL1-like"/>
</dbReference>
<dbReference type="InterPro" id="IPR028364">
    <property type="entry name" value="Ribosomal_uL1/biogenesis"/>
</dbReference>
<dbReference type="InterPro" id="IPR016095">
    <property type="entry name" value="Ribosomal_uL1_3-a/b-sand"/>
</dbReference>
<dbReference type="InterPro" id="IPR023673">
    <property type="entry name" value="Ribosomal_uL1_CS"/>
</dbReference>
<dbReference type="NCBIfam" id="TIGR01169">
    <property type="entry name" value="rplA_bact"/>
    <property type="match status" value="1"/>
</dbReference>
<dbReference type="PANTHER" id="PTHR36427">
    <property type="entry name" value="54S RIBOSOMAL PROTEIN L1, MITOCHONDRIAL"/>
    <property type="match status" value="1"/>
</dbReference>
<dbReference type="PANTHER" id="PTHR36427:SF3">
    <property type="entry name" value="LARGE RIBOSOMAL SUBUNIT PROTEIN UL1M"/>
    <property type="match status" value="1"/>
</dbReference>
<dbReference type="Pfam" id="PF00687">
    <property type="entry name" value="Ribosomal_L1"/>
    <property type="match status" value="1"/>
</dbReference>
<dbReference type="PIRSF" id="PIRSF002155">
    <property type="entry name" value="Ribosomal_L1"/>
    <property type="match status" value="1"/>
</dbReference>
<dbReference type="SUPFAM" id="SSF56808">
    <property type="entry name" value="Ribosomal protein L1"/>
    <property type="match status" value="1"/>
</dbReference>
<dbReference type="PROSITE" id="PS01199">
    <property type="entry name" value="RIBOSOMAL_L1"/>
    <property type="match status" value="1"/>
</dbReference>